<evidence type="ECO:0000255" key="1">
    <source>
        <dbReference type="HAMAP-Rule" id="MF_01080"/>
    </source>
</evidence>
<proteinExistence type="inferred from homology"/>
<dbReference type="EC" id="5.4.99.25" evidence="1"/>
<dbReference type="EMBL" id="CP000087">
    <property type="protein sequence ID" value="ABE04852.1"/>
    <property type="molecule type" value="Genomic_DNA"/>
</dbReference>
<dbReference type="RefSeq" id="WP_011477439.1">
    <property type="nucleotide sequence ID" value="NC_007940.1"/>
</dbReference>
<dbReference type="SMR" id="Q1RIG2"/>
<dbReference type="KEGG" id="rbe:RBE_0771"/>
<dbReference type="eggNOG" id="COG0130">
    <property type="taxonomic scope" value="Bacteria"/>
</dbReference>
<dbReference type="HOGENOM" id="CLU_032087_0_3_5"/>
<dbReference type="OrthoDB" id="9802309at2"/>
<dbReference type="Proteomes" id="UP000001951">
    <property type="component" value="Chromosome"/>
</dbReference>
<dbReference type="GO" id="GO:0003723">
    <property type="term" value="F:RNA binding"/>
    <property type="evidence" value="ECO:0007669"/>
    <property type="project" value="InterPro"/>
</dbReference>
<dbReference type="GO" id="GO:0160148">
    <property type="term" value="F:tRNA pseudouridine(55) synthase activity"/>
    <property type="evidence" value="ECO:0007669"/>
    <property type="project" value="UniProtKB-EC"/>
</dbReference>
<dbReference type="GO" id="GO:1990481">
    <property type="term" value="P:mRNA pseudouridine synthesis"/>
    <property type="evidence" value="ECO:0007669"/>
    <property type="project" value="TreeGrafter"/>
</dbReference>
<dbReference type="GO" id="GO:0031119">
    <property type="term" value="P:tRNA pseudouridine synthesis"/>
    <property type="evidence" value="ECO:0007669"/>
    <property type="project" value="UniProtKB-UniRule"/>
</dbReference>
<dbReference type="CDD" id="cd02573">
    <property type="entry name" value="PseudoU_synth_EcTruB"/>
    <property type="match status" value="1"/>
</dbReference>
<dbReference type="Gene3D" id="3.30.2350.10">
    <property type="entry name" value="Pseudouridine synthase"/>
    <property type="match status" value="1"/>
</dbReference>
<dbReference type="HAMAP" id="MF_01080">
    <property type="entry name" value="TruB_bact"/>
    <property type="match status" value="1"/>
</dbReference>
<dbReference type="InterPro" id="IPR020103">
    <property type="entry name" value="PsdUridine_synth_cat_dom_sf"/>
</dbReference>
<dbReference type="InterPro" id="IPR002501">
    <property type="entry name" value="PsdUridine_synth_N"/>
</dbReference>
<dbReference type="InterPro" id="IPR014780">
    <property type="entry name" value="tRNA_psdUridine_synth_TruB"/>
</dbReference>
<dbReference type="InterPro" id="IPR032819">
    <property type="entry name" value="TruB_C"/>
</dbReference>
<dbReference type="NCBIfam" id="TIGR00431">
    <property type="entry name" value="TruB"/>
    <property type="match status" value="1"/>
</dbReference>
<dbReference type="PANTHER" id="PTHR13767:SF2">
    <property type="entry name" value="PSEUDOURIDYLATE SYNTHASE TRUB1"/>
    <property type="match status" value="1"/>
</dbReference>
<dbReference type="PANTHER" id="PTHR13767">
    <property type="entry name" value="TRNA-PSEUDOURIDINE SYNTHASE"/>
    <property type="match status" value="1"/>
</dbReference>
<dbReference type="Pfam" id="PF16198">
    <property type="entry name" value="TruB_C_2"/>
    <property type="match status" value="1"/>
</dbReference>
<dbReference type="Pfam" id="PF01509">
    <property type="entry name" value="TruB_N"/>
    <property type="match status" value="1"/>
</dbReference>
<dbReference type="SUPFAM" id="SSF55120">
    <property type="entry name" value="Pseudouridine synthase"/>
    <property type="match status" value="1"/>
</dbReference>
<gene>
    <name evidence="1" type="primary">truB</name>
    <name type="ordered locus">RBE_0771</name>
</gene>
<feature type="chain" id="PRO_0000277928" description="tRNA pseudouridine synthase B">
    <location>
        <begin position="1"/>
        <end position="293"/>
    </location>
</feature>
<feature type="active site" description="Nucleophile" evidence="1">
    <location>
        <position position="39"/>
    </location>
</feature>
<sequence>MNSYWLNVYKPRGISSAKLVSIIKKVLGKVKIGHSGTLDVEAEGVLPLAIGEATKLVQMLIDAKKTYIFTVKFGKQTDSGDYAGKVIAITDYIPSKENAYAICSKFIGTITQIPPAFSALKVNGVRAYKLARDGKEVELKPRNITIYDLKCLNYDEQNATATYYAECSKGTYIRTLAEDLALSLQSLGFVIELRRTQVGIFKEENSIRIDSFNDITKLSLEEKNIKIEAILDDILVLDANDEQAQKIKYGQKCLFDYDKNVDFMWVRYKGVLLTIGSLNKNCFHSLRVFNLTQ</sequence>
<comment type="function">
    <text evidence="1">Responsible for synthesis of pseudouridine from uracil-55 in the psi GC loop of transfer RNAs.</text>
</comment>
<comment type="catalytic activity">
    <reaction evidence="1">
        <text>uridine(55) in tRNA = pseudouridine(55) in tRNA</text>
        <dbReference type="Rhea" id="RHEA:42532"/>
        <dbReference type="Rhea" id="RHEA-COMP:10101"/>
        <dbReference type="Rhea" id="RHEA-COMP:10102"/>
        <dbReference type="ChEBI" id="CHEBI:65314"/>
        <dbReference type="ChEBI" id="CHEBI:65315"/>
        <dbReference type="EC" id="5.4.99.25"/>
    </reaction>
</comment>
<comment type="similarity">
    <text evidence="1">Belongs to the pseudouridine synthase TruB family. Type 1 subfamily.</text>
</comment>
<accession>Q1RIG2</accession>
<keyword id="KW-0413">Isomerase</keyword>
<keyword id="KW-0819">tRNA processing</keyword>
<protein>
    <recommendedName>
        <fullName evidence="1">tRNA pseudouridine synthase B</fullName>
        <ecNumber evidence="1">5.4.99.25</ecNumber>
    </recommendedName>
    <alternativeName>
        <fullName evidence="1">tRNA pseudouridine(55) synthase</fullName>
        <shortName evidence="1">Psi55 synthase</shortName>
    </alternativeName>
    <alternativeName>
        <fullName evidence="1">tRNA pseudouridylate synthase</fullName>
    </alternativeName>
    <alternativeName>
        <fullName evidence="1">tRNA-uridine isomerase</fullName>
    </alternativeName>
</protein>
<organism>
    <name type="scientific">Rickettsia bellii (strain RML369-C)</name>
    <dbReference type="NCBI Taxonomy" id="336407"/>
    <lineage>
        <taxon>Bacteria</taxon>
        <taxon>Pseudomonadati</taxon>
        <taxon>Pseudomonadota</taxon>
        <taxon>Alphaproteobacteria</taxon>
        <taxon>Rickettsiales</taxon>
        <taxon>Rickettsiaceae</taxon>
        <taxon>Rickettsieae</taxon>
        <taxon>Rickettsia</taxon>
        <taxon>belli group</taxon>
    </lineage>
</organism>
<reference key="1">
    <citation type="journal article" date="2006" name="PLoS Genet.">
        <title>Genome sequence of Rickettsia bellii illuminates the role of amoebae in gene exchanges between intracellular pathogens.</title>
        <authorList>
            <person name="Ogata H."/>
            <person name="La Scola B."/>
            <person name="Audic S."/>
            <person name="Renesto P."/>
            <person name="Blanc G."/>
            <person name="Robert C."/>
            <person name="Fournier P.-E."/>
            <person name="Claverie J.-M."/>
            <person name="Raoult D."/>
        </authorList>
    </citation>
    <scope>NUCLEOTIDE SEQUENCE [LARGE SCALE GENOMIC DNA]</scope>
    <source>
        <strain>RML369-C</strain>
    </source>
</reference>
<name>TRUB_RICBR</name>